<keyword id="KW-0067">ATP-binding</keyword>
<keyword id="KW-0963">Cytoplasm</keyword>
<keyword id="KW-0418">Kinase</keyword>
<keyword id="KW-0460">Magnesium</keyword>
<keyword id="KW-0479">Metal-binding</keyword>
<keyword id="KW-0546">Nucleotide metabolism</keyword>
<keyword id="KW-0547">Nucleotide-binding</keyword>
<keyword id="KW-0597">Phosphoprotein</keyword>
<keyword id="KW-0808">Transferase</keyword>
<comment type="function">
    <text evidence="1">Major role in the synthesis of nucleoside triphosphates other than ATP. The ATP gamma phosphate is transferred to the NDP beta phosphate via a ping-pong mechanism, using a phosphorylated active-site intermediate.</text>
</comment>
<comment type="catalytic activity">
    <reaction evidence="1">
        <text>a 2'-deoxyribonucleoside 5'-diphosphate + ATP = a 2'-deoxyribonucleoside 5'-triphosphate + ADP</text>
        <dbReference type="Rhea" id="RHEA:44640"/>
        <dbReference type="ChEBI" id="CHEBI:30616"/>
        <dbReference type="ChEBI" id="CHEBI:61560"/>
        <dbReference type="ChEBI" id="CHEBI:73316"/>
        <dbReference type="ChEBI" id="CHEBI:456216"/>
        <dbReference type="EC" id="2.7.4.6"/>
    </reaction>
</comment>
<comment type="catalytic activity">
    <reaction evidence="1">
        <text>a ribonucleoside 5'-diphosphate + ATP = a ribonucleoside 5'-triphosphate + ADP</text>
        <dbReference type="Rhea" id="RHEA:18113"/>
        <dbReference type="ChEBI" id="CHEBI:30616"/>
        <dbReference type="ChEBI" id="CHEBI:57930"/>
        <dbReference type="ChEBI" id="CHEBI:61557"/>
        <dbReference type="ChEBI" id="CHEBI:456216"/>
        <dbReference type="EC" id="2.7.4.6"/>
    </reaction>
</comment>
<comment type="cofactor">
    <cofactor evidence="1">
        <name>Mg(2+)</name>
        <dbReference type="ChEBI" id="CHEBI:18420"/>
    </cofactor>
</comment>
<comment type="subunit">
    <text evidence="1">Homotetramer.</text>
</comment>
<comment type="subcellular location">
    <subcellularLocation>
        <location evidence="1">Cytoplasm</location>
    </subcellularLocation>
</comment>
<comment type="similarity">
    <text evidence="1">Belongs to the NDK family.</text>
</comment>
<sequence>MSVERTLSIIKPDAVAKNVIGQIIARFENAGLKVIAARLQQLSRADAERFYAVHKERPFFKDLVDFMVSGPVFVQVLEGEGAIQKNRDLMGATDPKKAAPGTIRADFADSIDANAVHGSDAAETAAVEVAFFFPEINIHSR</sequence>
<organism>
    <name type="scientific">Bordetella petrii (strain ATCC BAA-461 / DSM 12804 / CCUG 43448)</name>
    <dbReference type="NCBI Taxonomy" id="340100"/>
    <lineage>
        <taxon>Bacteria</taxon>
        <taxon>Pseudomonadati</taxon>
        <taxon>Pseudomonadota</taxon>
        <taxon>Betaproteobacteria</taxon>
        <taxon>Burkholderiales</taxon>
        <taxon>Alcaligenaceae</taxon>
        <taxon>Bordetella</taxon>
    </lineage>
</organism>
<reference key="1">
    <citation type="journal article" date="2008" name="BMC Genomics">
        <title>The missing link: Bordetella petrii is endowed with both the metabolic versatility of environmental bacteria and virulence traits of pathogenic Bordetellae.</title>
        <authorList>
            <person name="Gross R."/>
            <person name="Guzman C.A."/>
            <person name="Sebaihia M."/>
            <person name="Martin dos Santos V.A.P."/>
            <person name="Pieper D.H."/>
            <person name="Koebnik R."/>
            <person name="Lechner M."/>
            <person name="Bartels D."/>
            <person name="Buhrmester J."/>
            <person name="Choudhuri J.V."/>
            <person name="Ebensen T."/>
            <person name="Gaigalat L."/>
            <person name="Herrmann S."/>
            <person name="Khachane A.N."/>
            <person name="Larisch C."/>
            <person name="Link S."/>
            <person name="Linke B."/>
            <person name="Meyer F."/>
            <person name="Mormann S."/>
            <person name="Nakunst D."/>
            <person name="Rueckert C."/>
            <person name="Schneiker-Bekel S."/>
            <person name="Schulze K."/>
            <person name="Voerholter F.-J."/>
            <person name="Yevsa T."/>
            <person name="Engle J.T."/>
            <person name="Goldman W.E."/>
            <person name="Puehler A."/>
            <person name="Goebel U.B."/>
            <person name="Goesmann A."/>
            <person name="Bloecker H."/>
            <person name="Kaiser O."/>
            <person name="Martinez-Arias R."/>
        </authorList>
    </citation>
    <scope>NUCLEOTIDE SEQUENCE [LARGE SCALE GENOMIC DNA]</scope>
    <source>
        <strain>ATCC BAA-461 / DSM 12804 / CCUG 43448</strain>
    </source>
</reference>
<proteinExistence type="inferred from homology"/>
<dbReference type="EC" id="2.7.4.6" evidence="1"/>
<dbReference type="EMBL" id="AM902716">
    <property type="protein sequence ID" value="CAP42356.1"/>
    <property type="molecule type" value="Genomic_DNA"/>
</dbReference>
<dbReference type="SMR" id="A9IK55"/>
<dbReference type="STRING" id="94624.Bpet2016"/>
<dbReference type="KEGG" id="bpt:Bpet2016"/>
<dbReference type="eggNOG" id="COG0105">
    <property type="taxonomic scope" value="Bacteria"/>
</dbReference>
<dbReference type="Proteomes" id="UP000001225">
    <property type="component" value="Chromosome"/>
</dbReference>
<dbReference type="GO" id="GO:0005737">
    <property type="term" value="C:cytoplasm"/>
    <property type="evidence" value="ECO:0007669"/>
    <property type="project" value="UniProtKB-SubCell"/>
</dbReference>
<dbReference type="GO" id="GO:0005524">
    <property type="term" value="F:ATP binding"/>
    <property type="evidence" value="ECO:0007669"/>
    <property type="project" value="UniProtKB-UniRule"/>
</dbReference>
<dbReference type="GO" id="GO:0046872">
    <property type="term" value="F:metal ion binding"/>
    <property type="evidence" value="ECO:0007669"/>
    <property type="project" value="UniProtKB-KW"/>
</dbReference>
<dbReference type="GO" id="GO:0004550">
    <property type="term" value="F:nucleoside diphosphate kinase activity"/>
    <property type="evidence" value="ECO:0007669"/>
    <property type="project" value="UniProtKB-UniRule"/>
</dbReference>
<dbReference type="GO" id="GO:0006241">
    <property type="term" value="P:CTP biosynthetic process"/>
    <property type="evidence" value="ECO:0007669"/>
    <property type="project" value="UniProtKB-UniRule"/>
</dbReference>
<dbReference type="GO" id="GO:0006183">
    <property type="term" value="P:GTP biosynthetic process"/>
    <property type="evidence" value="ECO:0007669"/>
    <property type="project" value="UniProtKB-UniRule"/>
</dbReference>
<dbReference type="GO" id="GO:0006228">
    <property type="term" value="P:UTP biosynthetic process"/>
    <property type="evidence" value="ECO:0007669"/>
    <property type="project" value="UniProtKB-UniRule"/>
</dbReference>
<dbReference type="CDD" id="cd04413">
    <property type="entry name" value="NDPk_I"/>
    <property type="match status" value="1"/>
</dbReference>
<dbReference type="FunFam" id="3.30.70.141:FF:000001">
    <property type="entry name" value="Nucleoside diphosphate kinase"/>
    <property type="match status" value="1"/>
</dbReference>
<dbReference type="Gene3D" id="3.30.70.141">
    <property type="entry name" value="Nucleoside diphosphate kinase-like domain"/>
    <property type="match status" value="1"/>
</dbReference>
<dbReference type="HAMAP" id="MF_00451">
    <property type="entry name" value="NDP_kinase"/>
    <property type="match status" value="1"/>
</dbReference>
<dbReference type="InterPro" id="IPR034907">
    <property type="entry name" value="NDK-like_dom"/>
</dbReference>
<dbReference type="InterPro" id="IPR036850">
    <property type="entry name" value="NDK-like_dom_sf"/>
</dbReference>
<dbReference type="InterPro" id="IPR001564">
    <property type="entry name" value="Nucleoside_diP_kinase"/>
</dbReference>
<dbReference type="NCBIfam" id="NF001908">
    <property type="entry name" value="PRK00668.1"/>
    <property type="match status" value="1"/>
</dbReference>
<dbReference type="PANTHER" id="PTHR46161">
    <property type="entry name" value="NUCLEOSIDE DIPHOSPHATE KINASE"/>
    <property type="match status" value="1"/>
</dbReference>
<dbReference type="PANTHER" id="PTHR46161:SF3">
    <property type="entry name" value="NUCLEOSIDE DIPHOSPHATE KINASE DDB_G0292928-RELATED"/>
    <property type="match status" value="1"/>
</dbReference>
<dbReference type="Pfam" id="PF00334">
    <property type="entry name" value="NDK"/>
    <property type="match status" value="1"/>
</dbReference>
<dbReference type="PRINTS" id="PR01243">
    <property type="entry name" value="NUCDPKINASE"/>
</dbReference>
<dbReference type="SMART" id="SM00562">
    <property type="entry name" value="NDK"/>
    <property type="match status" value="1"/>
</dbReference>
<dbReference type="SUPFAM" id="SSF54919">
    <property type="entry name" value="Nucleoside diphosphate kinase, NDK"/>
    <property type="match status" value="1"/>
</dbReference>
<dbReference type="PROSITE" id="PS51374">
    <property type="entry name" value="NDPK_LIKE"/>
    <property type="match status" value="1"/>
</dbReference>
<name>NDK_BORPD</name>
<accession>A9IK55</accession>
<evidence type="ECO:0000255" key="1">
    <source>
        <dbReference type="HAMAP-Rule" id="MF_00451"/>
    </source>
</evidence>
<feature type="chain" id="PRO_1000124934" description="Nucleoside diphosphate kinase">
    <location>
        <begin position="1"/>
        <end position="141"/>
    </location>
</feature>
<feature type="active site" description="Pros-phosphohistidine intermediate" evidence="1">
    <location>
        <position position="117"/>
    </location>
</feature>
<feature type="binding site" evidence="1">
    <location>
        <position position="11"/>
    </location>
    <ligand>
        <name>ATP</name>
        <dbReference type="ChEBI" id="CHEBI:30616"/>
    </ligand>
</feature>
<feature type="binding site" evidence="1">
    <location>
        <position position="59"/>
    </location>
    <ligand>
        <name>ATP</name>
        <dbReference type="ChEBI" id="CHEBI:30616"/>
    </ligand>
</feature>
<feature type="binding site" evidence="1">
    <location>
        <position position="87"/>
    </location>
    <ligand>
        <name>ATP</name>
        <dbReference type="ChEBI" id="CHEBI:30616"/>
    </ligand>
</feature>
<feature type="binding site" evidence="1">
    <location>
        <position position="93"/>
    </location>
    <ligand>
        <name>ATP</name>
        <dbReference type="ChEBI" id="CHEBI:30616"/>
    </ligand>
</feature>
<feature type="binding site" evidence="1">
    <location>
        <position position="104"/>
    </location>
    <ligand>
        <name>ATP</name>
        <dbReference type="ChEBI" id="CHEBI:30616"/>
    </ligand>
</feature>
<feature type="binding site" evidence="1">
    <location>
        <position position="114"/>
    </location>
    <ligand>
        <name>ATP</name>
        <dbReference type="ChEBI" id="CHEBI:30616"/>
    </ligand>
</feature>
<gene>
    <name evidence="1" type="primary">ndk</name>
    <name type="ordered locus">Bpet2016</name>
</gene>
<protein>
    <recommendedName>
        <fullName evidence="1">Nucleoside diphosphate kinase</fullName>
        <shortName evidence="1">NDK</shortName>
        <shortName evidence="1">NDP kinase</shortName>
        <ecNumber evidence="1">2.7.4.6</ecNumber>
    </recommendedName>
    <alternativeName>
        <fullName evidence="1">Nucleoside-2-P kinase</fullName>
    </alternativeName>
</protein>